<reference key="1">
    <citation type="journal article" date="2009" name="BMC Genomics">
        <title>Evidence for niche adaptation in the genome of the bovine pathogen Streptococcus uberis.</title>
        <authorList>
            <person name="Ward P.N."/>
            <person name="Holden M.T.G."/>
            <person name="Leigh J.A."/>
            <person name="Lennard N."/>
            <person name="Bignell A."/>
            <person name="Barron A."/>
            <person name="Clark L."/>
            <person name="Quail M.A."/>
            <person name="Woodward J."/>
            <person name="Barrell B.G."/>
            <person name="Egan S.A."/>
            <person name="Field T.R."/>
            <person name="Maskell D."/>
            <person name="Kehoe M."/>
            <person name="Dowson C.G."/>
            <person name="Chanter N."/>
            <person name="Whatmore A.M."/>
            <person name="Bentley S.D."/>
            <person name="Parkhill J."/>
        </authorList>
    </citation>
    <scope>NUCLEOTIDE SEQUENCE [LARGE SCALE GENOMIC DNA]</scope>
    <source>
        <strain>ATCC BAA-854 / 0140J</strain>
    </source>
</reference>
<accession>B9DS62</accession>
<comment type="function">
    <text evidence="1">Catalyzes the folate-dependent formation of 5-methyl-uridine at position 54 (M-5-U54) in all tRNAs.</text>
</comment>
<comment type="catalytic activity">
    <reaction evidence="1">
        <text>uridine(54) in tRNA + (6R)-5,10-methylene-5,6,7,8-tetrahydrofolate + NADH + H(+) = 5-methyluridine(54) in tRNA + (6S)-5,6,7,8-tetrahydrofolate + NAD(+)</text>
        <dbReference type="Rhea" id="RHEA:16873"/>
        <dbReference type="Rhea" id="RHEA-COMP:10167"/>
        <dbReference type="Rhea" id="RHEA-COMP:10193"/>
        <dbReference type="ChEBI" id="CHEBI:15378"/>
        <dbReference type="ChEBI" id="CHEBI:15636"/>
        <dbReference type="ChEBI" id="CHEBI:57453"/>
        <dbReference type="ChEBI" id="CHEBI:57540"/>
        <dbReference type="ChEBI" id="CHEBI:57945"/>
        <dbReference type="ChEBI" id="CHEBI:65315"/>
        <dbReference type="ChEBI" id="CHEBI:74447"/>
        <dbReference type="EC" id="2.1.1.74"/>
    </reaction>
</comment>
<comment type="catalytic activity">
    <reaction evidence="1">
        <text>uridine(54) in tRNA + (6R)-5,10-methylene-5,6,7,8-tetrahydrofolate + NADPH + H(+) = 5-methyluridine(54) in tRNA + (6S)-5,6,7,8-tetrahydrofolate + NADP(+)</text>
        <dbReference type="Rhea" id="RHEA:62372"/>
        <dbReference type="Rhea" id="RHEA-COMP:10167"/>
        <dbReference type="Rhea" id="RHEA-COMP:10193"/>
        <dbReference type="ChEBI" id="CHEBI:15378"/>
        <dbReference type="ChEBI" id="CHEBI:15636"/>
        <dbReference type="ChEBI" id="CHEBI:57453"/>
        <dbReference type="ChEBI" id="CHEBI:57783"/>
        <dbReference type="ChEBI" id="CHEBI:58349"/>
        <dbReference type="ChEBI" id="CHEBI:65315"/>
        <dbReference type="ChEBI" id="CHEBI:74447"/>
        <dbReference type="EC" id="2.1.1.74"/>
    </reaction>
</comment>
<comment type="cofactor">
    <cofactor evidence="1">
        <name>FAD</name>
        <dbReference type="ChEBI" id="CHEBI:57692"/>
    </cofactor>
</comment>
<comment type="subcellular location">
    <subcellularLocation>
        <location evidence="1">Cytoplasm</location>
    </subcellularLocation>
</comment>
<comment type="similarity">
    <text evidence="1">Belongs to the MnmG family. TrmFO subfamily.</text>
</comment>
<evidence type="ECO:0000255" key="1">
    <source>
        <dbReference type="HAMAP-Rule" id="MF_01037"/>
    </source>
</evidence>
<protein>
    <recommendedName>
        <fullName evidence="1">Methylenetetrahydrofolate--tRNA-(uracil-5-)-methyltransferase TrmFO</fullName>
        <ecNumber evidence="1">2.1.1.74</ecNumber>
    </recommendedName>
    <alternativeName>
        <fullName evidence="1">Folate-dependent tRNA (uracil-5-)-methyltransferase</fullName>
    </alternativeName>
    <alternativeName>
        <fullName evidence="1">Folate-dependent tRNA(M-5-U54)-methyltransferase</fullName>
    </alternativeName>
</protein>
<keyword id="KW-0963">Cytoplasm</keyword>
<keyword id="KW-0274">FAD</keyword>
<keyword id="KW-0285">Flavoprotein</keyword>
<keyword id="KW-0489">Methyltransferase</keyword>
<keyword id="KW-0520">NAD</keyword>
<keyword id="KW-0521">NADP</keyword>
<keyword id="KW-1185">Reference proteome</keyword>
<keyword id="KW-0808">Transferase</keyword>
<keyword id="KW-0819">tRNA processing</keyword>
<organism>
    <name type="scientific">Streptococcus uberis (strain ATCC BAA-854 / 0140J)</name>
    <dbReference type="NCBI Taxonomy" id="218495"/>
    <lineage>
        <taxon>Bacteria</taxon>
        <taxon>Bacillati</taxon>
        <taxon>Bacillota</taxon>
        <taxon>Bacilli</taxon>
        <taxon>Lactobacillales</taxon>
        <taxon>Streptococcaceae</taxon>
        <taxon>Streptococcus</taxon>
    </lineage>
</organism>
<gene>
    <name evidence="1" type="primary">trmFO</name>
    <name type="ordered locus">SUB0921</name>
</gene>
<dbReference type="EC" id="2.1.1.74" evidence="1"/>
<dbReference type="EMBL" id="AM946015">
    <property type="protein sequence ID" value="CAR42047.1"/>
    <property type="molecule type" value="Genomic_DNA"/>
</dbReference>
<dbReference type="RefSeq" id="WP_012658420.1">
    <property type="nucleotide sequence ID" value="NC_012004.1"/>
</dbReference>
<dbReference type="SMR" id="B9DS62"/>
<dbReference type="STRING" id="218495.SUB0921"/>
<dbReference type="KEGG" id="sub:SUB0921"/>
<dbReference type="eggNOG" id="COG1206">
    <property type="taxonomic scope" value="Bacteria"/>
</dbReference>
<dbReference type="HOGENOM" id="CLU_033057_1_0_9"/>
<dbReference type="OrthoDB" id="9803114at2"/>
<dbReference type="Proteomes" id="UP000000449">
    <property type="component" value="Chromosome"/>
</dbReference>
<dbReference type="GO" id="GO:0005829">
    <property type="term" value="C:cytosol"/>
    <property type="evidence" value="ECO:0007669"/>
    <property type="project" value="TreeGrafter"/>
</dbReference>
<dbReference type="GO" id="GO:0050660">
    <property type="term" value="F:flavin adenine dinucleotide binding"/>
    <property type="evidence" value="ECO:0007669"/>
    <property type="project" value="UniProtKB-UniRule"/>
</dbReference>
<dbReference type="GO" id="GO:0047151">
    <property type="term" value="F:tRNA (uracil(54)-C5)-methyltransferase activity, 5,10-methylenetetrahydrofolate-dependent"/>
    <property type="evidence" value="ECO:0007669"/>
    <property type="project" value="UniProtKB-UniRule"/>
</dbReference>
<dbReference type="GO" id="GO:0030488">
    <property type="term" value="P:tRNA methylation"/>
    <property type="evidence" value="ECO:0007669"/>
    <property type="project" value="TreeGrafter"/>
</dbReference>
<dbReference type="GO" id="GO:0002098">
    <property type="term" value="P:tRNA wobble uridine modification"/>
    <property type="evidence" value="ECO:0007669"/>
    <property type="project" value="TreeGrafter"/>
</dbReference>
<dbReference type="FunFam" id="3.50.50.60:FF:000035">
    <property type="entry name" value="Methylenetetrahydrofolate--tRNA-(uracil-5-)-methyltransferase TrmFO"/>
    <property type="match status" value="1"/>
</dbReference>
<dbReference type="FunFam" id="3.50.50.60:FF:000040">
    <property type="entry name" value="Methylenetetrahydrofolate--tRNA-(uracil-5-)-methyltransferase TrmFO"/>
    <property type="match status" value="1"/>
</dbReference>
<dbReference type="Gene3D" id="3.50.50.60">
    <property type="entry name" value="FAD/NAD(P)-binding domain"/>
    <property type="match status" value="2"/>
</dbReference>
<dbReference type="HAMAP" id="MF_01037">
    <property type="entry name" value="TrmFO"/>
    <property type="match status" value="1"/>
</dbReference>
<dbReference type="InterPro" id="IPR036188">
    <property type="entry name" value="FAD/NAD-bd_sf"/>
</dbReference>
<dbReference type="InterPro" id="IPR002218">
    <property type="entry name" value="MnmG-rel"/>
</dbReference>
<dbReference type="InterPro" id="IPR020595">
    <property type="entry name" value="MnmG-rel_CS"/>
</dbReference>
<dbReference type="InterPro" id="IPR040131">
    <property type="entry name" value="MnmG_N"/>
</dbReference>
<dbReference type="InterPro" id="IPR004417">
    <property type="entry name" value="TrmFO"/>
</dbReference>
<dbReference type="NCBIfam" id="TIGR00137">
    <property type="entry name" value="gid_trmFO"/>
    <property type="match status" value="1"/>
</dbReference>
<dbReference type="NCBIfam" id="NF003739">
    <property type="entry name" value="PRK05335.1"/>
    <property type="match status" value="1"/>
</dbReference>
<dbReference type="PANTHER" id="PTHR11806">
    <property type="entry name" value="GLUCOSE INHIBITED DIVISION PROTEIN A"/>
    <property type="match status" value="1"/>
</dbReference>
<dbReference type="PANTHER" id="PTHR11806:SF2">
    <property type="entry name" value="METHYLENETETRAHYDROFOLATE--TRNA-(URACIL-5-)-METHYLTRANSFERASE TRMFO"/>
    <property type="match status" value="1"/>
</dbReference>
<dbReference type="Pfam" id="PF01134">
    <property type="entry name" value="GIDA"/>
    <property type="match status" value="1"/>
</dbReference>
<dbReference type="SUPFAM" id="SSF51905">
    <property type="entry name" value="FAD/NAD(P)-binding domain"/>
    <property type="match status" value="1"/>
</dbReference>
<dbReference type="PROSITE" id="PS01281">
    <property type="entry name" value="GIDA_2"/>
    <property type="match status" value="1"/>
</dbReference>
<proteinExistence type="inferred from homology"/>
<feature type="chain" id="PRO_1000149479" description="Methylenetetrahydrofolate--tRNA-(uracil-5-)-methyltransferase TrmFO">
    <location>
        <begin position="1"/>
        <end position="444"/>
    </location>
</feature>
<feature type="binding site" evidence="1">
    <location>
        <begin position="10"/>
        <end position="15"/>
    </location>
    <ligand>
        <name>FAD</name>
        <dbReference type="ChEBI" id="CHEBI:57692"/>
    </ligand>
</feature>
<name>TRMFO_STRU0</name>
<sequence length="444" mass="49211">MSQSYINVIGAGLAGSEAAYQIAKRGIPVKLYEMRGVKATPQHKTSNFAELVCSNSFRGDSLTNAVGLLKEEMRRLDSIIMRAGEAHRVPAGGAMAVDRVGYAEAVTAELENNPLIEVIRGEITEIPNDAITVIATGPLTSDALAEKIHALNGGEGFYFYDAAAPIIDKSTINMDKVYLKSRYDKGEAAYLNCPMTKEEFLAFHEALTTAEEAPLNSFEKEKYFEGCMPIEVMAKRGIKTMLYGPMKPVGLEYPDDYKGPRDGDYKTPYAVVQLRQDNAAGSLYNMVGFQTHLKWGEQKRVFQMIPGLENAEFVRYGVMHRNSYMDSPNLLKQTFQSRANENLFFAGQMTGVEGYVESAASGLVAGINAARLFKGEEAIIFPETTAIGSLPHYVTHTDSKHFQPMNVNFGIIKELEGKRIRDKKERYEAIAERSLKDLEAFLNS</sequence>